<proteinExistence type="inferred from homology"/>
<dbReference type="EMBL" id="AF482497">
    <property type="protein sequence ID" value="AAQ05909.1"/>
    <property type="molecule type" value="Genomic_DNA"/>
</dbReference>
<dbReference type="RefSeq" id="YP_009258396.1">
    <property type="nucleotide sequence ID" value="NC_030355.1"/>
</dbReference>
<dbReference type="SMR" id="P59905"/>
<dbReference type="GeneID" id="27984717"/>
<dbReference type="GO" id="GO:0009535">
    <property type="term" value="C:chloroplast thylakoid membrane"/>
    <property type="evidence" value="ECO:0007669"/>
    <property type="project" value="UniProtKB-SubCell"/>
</dbReference>
<dbReference type="GO" id="GO:0009539">
    <property type="term" value="C:photosystem II reaction center"/>
    <property type="evidence" value="ECO:0007669"/>
    <property type="project" value="InterPro"/>
</dbReference>
<dbReference type="GO" id="GO:0015979">
    <property type="term" value="P:photosynthesis"/>
    <property type="evidence" value="ECO:0007669"/>
    <property type="project" value="UniProtKB-UniRule"/>
</dbReference>
<dbReference type="HAMAP" id="MF_00808">
    <property type="entry name" value="PSII_PsbT"/>
    <property type="match status" value="1"/>
</dbReference>
<dbReference type="InterPro" id="IPR001743">
    <property type="entry name" value="PSII_PsbT"/>
</dbReference>
<dbReference type="InterPro" id="IPR037268">
    <property type="entry name" value="PSII_PsbT_sf"/>
</dbReference>
<dbReference type="PANTHER" id="PTHR36411">
    <property type="match status" value="1"/>
</dbReference>
<dbReference type="PANTHER" id="PTHR36411:SF2">
    <property type="entry name" value="PHOTOSYSTEM II REACTION CENTER PROTEIN T"/>
    <property type="match status" value="1"/>
</dbReference>
<dbReference type="Pfam" id="PF01405">
    <property type="entry name" value="PsbT"/>
    <property type="match status" value="1"/>
</dbReference>
<dbReference type="SUPFAM" id="SSF161029">
    <property type="entry name" value="Photosystem II reaction center protein T, PsbT"/>
    <property type="match status" value="1"/>
</dbReference>
<keyword id="KW-0150">Chloroplast</keyword>
<keyword id="KW-0472">Membrane</keyword>
<keyword id="KW-0602">Photosynthesis</keyword>
<keyword id="KW-0604">Photosystem II</keyword>
<keyword id="KW-0934">Plastid</keyword>
<keyword id="KW-0793">Thylakoid</keyword>
<keyword id="KW-0812">Transmembrane</keyword>
<keyword id="KW-1133">Transmembrane helix</keyword>
<feature type="chain" id="PRO_0000217984" description="Photosystem II reaction center protein T">
    <location>
        <begin position="1"/>
        <end position="37"/>
    </location>
</feature>
<feature type="transmembrane region" description="Helical" evidence="1">
    <location>
        <begin position="3"/>
        <end position="23"/>
    </location>
</feature>
<organism>
    <name type="scientific">Spirogyra maxima</name>
    <name type="common">Green alga</name>
    <dbReference type="NCBI Taxonomy" id="3180"/>
    <lineage>
        <taxon>Eukaryota</taxon>
        <taxon>Viridiplantae</taxon>
        <taxon>Streptophyta</taxon>
        <taxon>Zygnematophyceae</taxon>
        <taxon>Zygnematophycidae</taxon>
        <taxon>Zygnematales</taxon>
        <taxon>Zygnemataceae</taxon>
        <taxon>Spirogyra</taxon>
    </lineage>
</organism>
<comment type="function">
    <text evidence="1">Found at the monomer-monomer interface of the photosystem II (PS II) dimer, plays a role in assembly and dimerization of PSII. PSII is a light-driven water plastoquinone oxidoreductase, using light energy to abstract electrons from H(2)O, generating a proton gradient subsequently used for ATP formation.</text>
</comment>
<comment type="subunit">
    <text evidence="1">PSII is composed of 1 copy each of membrane proteins PsbA, PsbB, PsbC, PsbD, PsbE, PsbF, PsbH, PsbI, PsbJ, PsbK, PsbL, PsbM, PsbT, PsbY, PsbZ, Psb30/Ycf12, at least 3 peripheral proteins of the oxygen-evolving complex and a large number of cofactors. It forms dimeric complexes.</text>
</comment>
<comment type="subcellular location">
    <subcellularLocation>
        <location evidence="1">Plastid</location>
        <location evidence="1">Chloroplast thylakoid membrane</location>
        <topology evidence="1">Single-pass membrane protein</topology>
    </subcellularLocation>
</comment>
<comment type="similarity">
    <text evidence="1">Belongs to the PsbT family.</text>
</comment>
<accession>P59905</accession>
<evidence type="ECO:0000255" key="1">
    <source>
        <dbReference type="HAMAP-Rule" id="MF_00808"/>
    </source>
</evidence>
<protein>
    <recommendedName>
        <fullName evidence="1">Photosystem II reaction center protein T</fullName>
        <shortName evidence="1">PSII-T</shortName>
    </recommendedName>
</protein>
<sequence>MEALVYTFLLVGTLGIIFFAIFFREPPKLPEASKSKK</sequence>
<gene>
    <name evidence="1" type="primary">psbT</name>
</gene>
<geneLocation type="chloroplast"/>
<name>PSBT_SPIMX</name>
<reference key="1">
    <citation type="submission" date="2002-02" db="EMBL/GenBank/DDBJ databases">
        <title>psbB gene cluster in Charophyceae.</title>
        <authorList>
            <person name="Lee J."/>
            <person name="Manhart J.R."/>
        </authorList>
    </citation>
    <scope>NUCLEOTIDE SEQUENCE [GENOMIC DNA]</scope>
</reference>